<comment type="function">
    <text evidence="1">Molecular chaperone. Has ATPase activity.</text>
</comment>
<comment type="subunit">
    <text evidence="1">Homodimer.</text>
</comment>
<comment type="subcellular location">
    <subcellularLocation>
        <location evidence="1">Cytoplasm</location>
    </subcellularLocation>
</comment>
<comment type="similarity">
    <text evidence="1">Belongs to the heat shock protein 90 family.</text>
</comment>
<organism>
    <name type="scientific">Halalkalibacterium halodurans (strain ATCC BAA-125 / DSM 18197 / FERM 7344 / JCM 9153 / C-125)</name>
    <name type="common">Bacillus halodurans</name>
    <dbReference type="NCBI Taxonomy" id="272558"/>
    <lineage>
        <taxon>Bacteria</taxon>
        <taxon>Bacillati</taxon>
        <taxon>Bacillota</taxon>
        <taxon>Bacilli</taxon>
        <taxon>Bacillales</taxon>
        <taxon>Bacillaceae</taxon>
        <taxon>Halalkalibacterium (ex Joshi et al. 2022)</taxon>
    </lineage>
</organism>
<accession>Q9KE51</accession>
<name>HTPG_HALH5</name>
<dbReference type="EMBL" id="BA000004">
    <property type="protein sequence ID" value="BAB04726.1"/>
    <property type="molecule type" value="Genomic_DNA"/>
</dbReference>
<dbReference type="PIR" id="G83775">
    <property type="entry name" value="G83775"/>
</dbReference>
<dbReference type="RefSeq" id="WP_010897177.1">
    <property type="nucleotide sequence ID" value="NC_002570.2"/>
</dbReference>
<dbReference type="SMR" id="Q9KE51"/>
<dbReference type="STRING" id="272558.gene:10726901"/>
<dbReference type="KEGG" id="bha:BH1007"/>
<dbReference type="eggNOG" id="COG0326">
    <property type="taxonomic scope" value="Bacteria"/>
</dbReference>
<dbReference type="HOGENOM" id="CLU_006684_3_0_9"/>
<dbReference type="OrthoDB" id="9802640at2"/>
<dbReference type="Proteomes" id="UP000001258">
    <property type="component" value="Chromosome"/>
</dbReference>
<dbReference type="GO" id="GO:0005737">
    <property type="term" value="C:cytoplasm"/>
    <property type="evidence" value="ECO:0007669"/>
    <property type="project" value="UniProtKB-SubCell"/>
</dbReference>
<dbReference type="GO" id="GO:0005524">
    <property type="term" value="F:ATP binding"/>
    <property type="evidence" value="ECO:0007669"/>
    <property type="project" value="UniProtKB-UniRule"/>
</dbReference>
<dbReference type="GO" id="GO:0016887">
    <property type="term" value="F:ATP hydrolysis activity"/>
    <property type="evidence" value="ECO:0007669"/>
    <property type="project" value="InterPro"/>
</dbReference>
<dbReference type="GO" id="GO:0140662">
    <property type="term" value="F:ATP-dependent protein folding chaperone"/>
    <property type="evidence" value="ECO:0007669"/>
    <property type="project" value="InterPro"/>
</dbReference>
<dbReference type="GO" id="GO:0051082">
    <property type="term" value="F:unfolded protein binding"/>
    <property type="evidence" value="ECO:0007669"/>
    <property type="project" value="UniProtKB-UniRule"/>
</dbReference>
<dbReference type="CDD" id="cd16927">
    <property type="entry name" value="HATPase_Hsp90-like"/>
    <property type="match status" value="1"/>
</dbReference>
<dbReference type="FunFam" id="1.20.120.790:FF:000006">
    <property type="entry name" value="Chaperone protein HtpG"/>
    <property type="match status" value="1"/>
</dbReference>
<dbReference type="FunFam" id="3.40.50.11260:FF:000008">
    <property type="entry name" value="Chaperone protein HtpG"/>
    <property type="match status" value="1"/>
</dbReference>
<dbReference type="FunFam" id="3.30.565.10:FF:000009">
    <property type="entry name" value="Molecular chaperone HtpG"/>
    <property type="match status" value="1"/>
</dbReference>
<dbReference type="Gene3D" id="3.30.230.80">
    <property type="match status" value="1"/>
</dbReference>
<dbReference type="Gene3D" id="3.40.50.11260">
    <property type="match status" value="1"/>
</dbReference>
<dbReference type="Gene3D" id="1.20.120.790">
    <property type="entry name" value="Heat shock protein 90, C-terminal domain"/>
    <property type="match status" value="1"/>
</dbReference>
<dbReference type="Gene3D" id="3.30.565.10">
    <property type="entry name" value="Histidine kinase-like ATPase, C-terminal domain"/>
    <property type="match status" value="1"/>
</dbReference>
<dbReference type="HAMAP" id="MF_00505">
    <property type="entry name" value="HSP90"/>
    <property type="match status" value="1"/>
</dbReference>
<dbReference type="InterPro" id="IPR036890">
    <property type="entry name" value="HATPase_C_sf"/>
</dbReference>
<dbReference type="InterPro" id="IPR019805">
    <property type="entry name" value="Heat_shock_protein_90_CS"/>
</dbReference>
<dbReference type="InterPro" id="IPR037196">
    <property type="entry name" value="HSP90_C"/>
</dbReference>
<dbReference type="InterPro" id="IPR001404">
    <property type="entry name" value="Hsp90_fam"/>
</dbReference>
<dbReference type="InterPro" id="IPR020575">
    <property type="entry name" value="Hsp90_N"/>
</dbReference>
<dbReference type="InterPro" id="IPR020568">
    <property type="entry name" value="Ribosomal_Su5_D2-typ_SF"/>
</dbReference>
<dbReference type="NCBIfam" id="NF003555">
    <property type="entry name" value="PRK05218.1"/>
    <property type="match status" value="1"/>
</dbReference>
<dbReference type="PANTHER" id="PTHR11528">
    <property type="entry name" value="HEAT SHOCK PROTEIN 90 FAMILY MEMBER"/>
    <property type="match status" value="1"/>
</dbReference>
<dbReference type="Pfam" id="PF13589">
    <property type="entry name" value="HATPase_c_3"/>
    <property type="match status" value="1"/>
</dbReference>
<dbReference type="Pfam" id="PF00183">
    <property type="entry name" value="HSP90"/>
    <property type="match status" value="2"/>
</dbReference>
<dbReference type="PIRSF" id="PIRSF002583">
    <property type="entry name" value="Hsp90"/>
    <property type="match status" value="1"/>
</dbReference>
<dbReference type="PRINTS" id="PR00775">
    <property type="entry name" value="HEATSHOCK90"/>
</dbReference>
<dbReference type="SMART" id="SM00387">
    <property type="entry name" value="HATPase_c"/>
    <property type="match status" value="1"/>
</dbReference>
<dbReference type="SUPFAM" id="SSF55874">
    <property type="entry name" value="ATPase domain of HSP90 chaperone/DNA topoisomerase II/histidine kinase"/>
    <property type="match status" value="1"/>
</dbReference>
<dbReference type="SUPFAM" id="SSF110942">
    <property type="entry name" value="HSP90 C-terminal domain"/>
    <property type="match status" value="1"/>
</dbReference>
<dbReference type="SUPFAM" id="SSF54211">
    <property type="entry name" value="Ribosomal protein S5 domain 2-like"/>
    <property type="match status" value="1"/>
</dbReference>
<dbReference type="PROSITE" id="PS00298">
    <property type="entry name" value="HSP90"/>
    <property type="match status" value="1"/>
</dbReference>
<protein>
    <recommendedName>
        <fullName evidence="1">Chaperone protein HtpG</fullName>
    </recommendedName>
    <alternativeName>
        <fullName evidence="1">Heat shock protein HtpG</fullName>
    </alternativeName>
    <alternativeName>
        <fullName evidence="1">High temperature protein G</fullName>
    </alternativeName>
</protein>
<feature type="chain" id="PRO_0000062967" description="Chaperone protein HtpG">
    <location>
        <begin position="1"/>
        <end position="625"/>
    </location>
</feature>
<feature type="region of interest" description="A; substrate-binding" evidence="1">
    <location>
        <begin position="1"/>
        <end position="341"/>
    </location>
</feature>
<feature type="region of interest" description="B" evidence="1">
    <location>
        <begin position="342"/>
        <end position="551"/>
    </location>
</feature>
<feature type="region of interest" description="C" evidence="1">
    <location>
        <begin position="552"/>
        <end position="625"/>
    </location>
</feature>
<evidence type="ECO:0000255" key="1">
    <source>
        <dbReference type="HAMAP-Rule" id="MF_00505"/>
    </source>
</evidence>
<sequence length="625" mass="72343">MERKEFKAESKRLLEMMVNSIYSQKEIFLRELISNASDAIDKIYYRALSDDSITFNKDDYFIKVTANKEDRTLTVSDTGIGMTKEELESNLGTIAKSGSLAFKTENESKDGHDIIGQFGVGFYSAFMVADKVTVTTKALGEESGYQWESTGADGYTILPIAKESVGTEIRLKLKENSEDESYDEFLEEYRLTSIIKKYSDFIRYPIKMDVTKRELKEGTEDEYEDVIEEQTINSMVPIWRKNKNELKDEDYTNFYHEKRYGFDQPLKHIHISVDGAVRYNAILFIPENIPFDYYTKEFEKGLELYSNGVLIMEKCPDLLPDYYSFVKGMVDSEDLSLNISREMLQHDRQLKLIAKNIKNKITSHLKTLLKDEREKFEQFYRSFGRQLKYGVYSDFGANKEDLQDLLLFYSSTEKKMVTLDEYVSRMKEDQPYIYYATGESYARIEKLPQTEMVADKGYEILYFTEDVDEFAIKMLASYKEKEFRSVSSGDLGFEDDEQKDTAADTDEQKELFEHMKTILDGKVKDVRASKRLKSHPVCLTAEGEVSIEMEKVLRAMPDNQNVQAEKVLEINVNHDVFDVLKASFESDKDKVDLYTKLLYNQALLIEGLPVEDPVAFSNDICKVMA</sequence>
<proteinExistence type="inferred from homology"/>
<keyword id="KW-0067">ATP-binding</keyword>
<keyword id="KW-0143">Chaperone</keyword>
<keyword id="KW-0963">Cytoplasm</keyword>
<keyword id="KW-0547">Nucleotide-binding</keyword>
<keyword id="KW-1185">Reference proteome</keyword>
<keyword id="KW-0346">Stress response</keyword>
<gene>
    <name evidence="1" type="primary">htpG</name>
    <name type="ordered locus">BH1007</name>
</gene>
<reference key="1">
    <citation type="journal article" date="2000" name="Nucleic Acids Res.">
        <title>Complete genome sequence of the alkaliphilic bacterium Bacillus halodurans and genomic sequence comparison with Bacillus subtilis.</title>
        <authorList>
            <person name="Takami H."/>
            <person name="Nakasone K."/>
            <person name="Takaki Y."/>
            <person name="Maeno G."/>
            <person name="Sasaki R."/>
            <person name="Masui N."/>
            <person name="Fuji F."/>
            <person name="Hirama C."/>
            <person name="Nakamura Y."/>
            <person name="Ogasawara N."/>
            <person name="Kuhara S."/>
            <person name="Horikoshi K."/>
        </authorList>
    </citation>
    <scope>NUCLEOTIDE SEQUENCE [LARGE SCALE GENOMIC DNA]</scope>
    <source>
        <strain>ATCC BAA-125 / DSM 18197 / FERM 7344 / JCM 9153 / C-125</strain>
    </source>
</reference>